<accession>Q6LAD6</accession>
<accession>Q05324</accession>
<accession>Q4LBF4</accession>
<feature type="propeptide" id="PRO_0000043329" description="Removed in mature form" evidence="2">
    <location>
        <begin position="1"/>
        <end position="71"/>
    </location>
</feature>
<feature type="chain" id="PRO_0000043330" description="Cysteine protease avirulence protein AvrRpt2">
    <location>
        <begin position="72"/>
        <end position="255"/>
    </location>
</feature>
<feature type="region of interest" description="Disordered" evidence="1">
    <location>
        <begin position="1"/>
        <end position="50"/>
    </location>
</feature>
<feature type="region of interest" description="Determinants of cleavage specificity">
    <location>
        <begin position="70"/>
        <end position="71"/>
    </location>
</feature>
<feature type="region of interest" description="Disordered" evidence="1">
    <location>
        <begin position="76"/>
        <end position="100"/>
    </location>
</feature>
<feature type="compositionally biased region" description="Low complexity" evidence="1">
    <location>
        <begin position="86"/>
        <end position="98"/>
    </location>
</feature>
<feature type="active site" description="Nucleophile">
    <location>
        <position position="122"/>
    </location>
</feature>
<feature type="active site">
    <location>
        <position position="208"/>
    </location>
</feature>
<feature type="active site">
    <location>
        <position position="226"/>
    </location>
</feature>
<feature type="site" description="Cleavage; by autolysis">
    <location>
        <begin position="71"/>
        <end position="72"/>
    </location>
</feature>
<feature type="mutagenesis site" description="No effect in cleavage." evidence="6">
    <original>GR</original>
    <variation>AA</variation>
    <location>
        <begin position="61"/>
        <end position="62"/>
    </location>
</feature>
<feature type="mutagenesis site" description="No effect in cleavage." evidence="6">
    <original>HK</original>
    <variation>AA</variation>
    <location>
        <begin position="63"/>
        <end position="64"/>
    </location>
</feature>
<feature type="mutagenesis site" description="No effect in cleavage." evidence="6">
    <original>IE</original>
    <variation>AA</variation>
    <location>
        <begin position="65"/>
        <end position="66"/>
    </location>
</feature>
<feature type="mutagenesis site" description="No effect in cleavage." evidence="6">
    <original>VP</original>
    <variation>AA</variation>
    <location>
        <begin position="67"/>
        <end position="68"/>
    </location>
</feature>
<feature type="mutagenesis site" description="No effect in cleavage." evidence="6">
    <original>A</original>
    <variation>S</variation>
    <location>
        <position position="69"/>
    </location>
</feature>
<feature type="mutagenesis site" description="Partially cleaved. Mainly localized to the chloroplast." evidence="6">
    <original>F</original>
    <variation>A</variation>
    <location>
        <position position="70"/>
    </location>
</feature>
<feature type="mutagenesis site" description="Partially cleaved. Mainly localized to the chloroplast." evidence="6">
    <original>G</original>
    <variation>A</variation>
    <location>
        <position position="71"/>
    </location>
</feature>
<feature type="mutagenesis site" description="No effect in cleavage." evidence="6">
    <original>G</original>
    <variation>A</variation>
    <location>
        <position position="72"/>
    </location>
</feature>
<feature type="mutagenesis site" description="No effect in cleavage." evidence="6">
    <original>KK</original>
    <variation>LL</variation>
    <location>
        <begin position="75"/>
        <end position="76"/>
    </location>
</feature>
<feature type="mutagenesis site" description="No effect in cleavage." evidence="6">
    <original>S</original>
    <variation>R</variation>
    <location>
        <position position="78"/>
    </location>
</feature>
<feature type="mutagenesis site" description="Abolishes the normal in planta processing, RIN4 degradation and fails to elicit RPS2-dependent defense response. Loses its ability to inhibit PAMP-induced growth suppression." evidence="4 5 7 10">
    <original>C</original>
    <variation>A</variation>
    <location>
        <position position="122"/>
    </location>
</feature>
<feature type="mutagenesis site" description="Deficient in both cleavage and recognition by RPS2 plant cells. Fails to elicit RPS2-dependent defense response. Localized to the chloroplast." evidence="4 5 7 10">
    <original>C</original>
    <variation>Y</variation>
    <location>
        <position position="122"/>
    </location>
</feature>
<feature type="mutagenesis site" description="Fails to elicit RPS2-dependent defense response." evidence="4 7">
    <original>G</original>
    <variation>D</variation>
    <location>
        <position position="131"/>
    </location>
</feature>
<feature type="mutagenesis site" description="Deficient in both cleavage and recognition by RPS2 plant cells. Fails to elicit RPS2-dependent defense response." evidence="4 7">
    <original>G</original>
    <variation>R</variation>
    <location>
        <position position="141"/>
    </location>
</feature>
<feature type="mutagenesis site" description="No effect in cleavage and fails to recognize RPS2 plant cells." evidence="7">
    <original>E</original>
    <variation>S</variation>
    <location>
        <position position="150"/>
    </location>
</feature>
<feature type="mutagenesis site" description="Fails to induce RIN4 disappearance and avirulence but retains virulence activity." evidence="8">
    <original>Y</original>
    <variation>C</variation>
    <location>
        <position position="191"/>
    </location>
</feature>
<feature type="mutagenesis site" description="Deficient in both cleavage and recognition by RPS2 plant cells. Fails to elicit RPS2-dependent defense response." evidence="4 7">
    <original>G</original>
    <variation>E</variation>
    <location>
        <position position="194"/>
    </location>
</feature>
<feature type="mutagenesis site" description="Fails to elicit RPS2-dependent defense response." evidence="4 7">
    <original>G</original>
    <variation>R</variation>
    <location>
        <position position="194"/>
    </location>
</feature>
<feature type="mutagenesis site" description="No effect in cleavage and fails to recognize RPS2 plant cells." evidence="6">
    <original>PN</original>
    <variation>RS</variation>
    <location>
        <begin position="203"/>
        <end position="204"/>
    </location>
</feature>
<feature type="mutagenesis site" description="Abolishes the normal in planta processing, RIN4 degradation and fails to elicit RPS2-dependent defense response." evidence="5">
    <original>H</original>
    <variation>A</variation>
    <location>
        <position position="208"/>
    </location>
</feature>
<feature type="mutagenesis site" description="Fails to induce RIN4 disappearance and avirulence but retains virulence activity." evidence="8">
    <original>D</original>
    <variation>E</variation>
    <location>
        <position position="216"/>
    </location>
</feature>
<feature type="mutagenesis site" description="Produces an unstable protein and fails to elicit RPS2-dependent defense response." evidence="5">
    <original>D</original>
    <variation>A</variation>
    <location>
        <position position="226"/>
    </location>
</feature>
<feature type="sequence conflict" description="In Ref. 2 and 3." evidence="12" ref="2 3">
    <original>G</original>
    <variation>A</variation>
    <location>
        <position position="151"/>
    </location>
</feature>
<keyword id="KW-0068">Autocatalytic cleavage</keyword>
<keyword id="KW-0903">Direct protein sequencing</keyword>
<keyword id="KW-1032">Host cell membrane</keyword>
<keyword id="KW-1043">Host membrane</keyword>
<keyword id="KW-0378">Hydrolase</keyword>
<keyword id="KW-0928">Hypersensitive response elicitation</keyword>
<keyword id="KW-0472">Membrane</keyword>
<keyword id="KW-0645">Protease</keyword>
<keyword id="KW-0964">Secreted</keyword>
<keyword id="KW-0788">Thiol protease</keyword>
<keyword id="KW-0843">Virulence</keyword>
<keyword id="KW-0865">Zymogen</keyword>
<proteinExistence type="evidence at protein level"/>
<dbReference type="EC" id="3.4.22.-"/>
<dbReference type="EMBL" id="Z21715">
    <property type="protein sequence ID" value="CAA79815.2"/>
    <property type="molecule type" value="Genomic_DNA"/>
</dbReference>
<dbReference type="EMBL" id="L11355">
    <property type="protein sequence ID" value="AAA71943.1"/>
    <property type="molecule type" value="Genomic_DNA"/>
</dbReference>
<dbReference type="EMBL" id="AJ870977">
    <property type="protein sequence ID" value="CAI36145.1"/>
    <property type="status" value="ALT_INIT"/>
    <property type="molecule type" value="Genomic_DNA"/>
</dbReference>
<dbReference type="PIR" id="A40613">
    <property type="entry name" value="A40613"/>
</dbReference>
<dbReference type="SMR" id="Q6LAD6"/>
<dbReference type="MEROPS" id="C70.001"/>
<dbReference type="KEGG" id="ag:CAA79815"/>
<dbReference type="PHI-base" id="PHI:5502"/>
<dbReference type="PHI-base" id="PHI:6389"/>
<dbReference type="PHI-base" id="PHI:979"/>
<dbReference type="GO" id="GO:0005576">
    <property type="term" value="C:extracellular region"/>
    <property type="evidence" value="ECO:0007669"/>
    <property type="project" value="UniProtKB-SubCell"/>
</dbReference>
<dbReference type="GO" id="GO:0020002">
    <property type="term" value="C:host cell plasma membrane"/>
    <property type="evidence" value="ECO:0007669"/>
    <property type="project" value="UniProtKB-SubCell"/>
</dbReference>
<dbReference type="GO" id="GO:0016020">
    <property type="term" value="C:membrane"/>
    <property type="evidence" value="ECO:0007669"/>
    <property type="project" value="UniProtKB-KW"/>
</dbReference>
<dbReference type="GO" id="GO:0008234">
    <property type="term" value="F:cysteine-type peptidase activity"/>
    <property type="evidence" value="ECO:0007669"/>
    <property type="project" value="UniProtKB-KW"/>
</dbReference>
<dbReference type="GO" id="GO:0006508">
    <property type="term" value="P:proteolysis"/>
    <property type="evidence" value="ECO:0007669"/>
    <property type="project" value="UniProtKB-KW"/>
</dbReference>
<dbReference type="GO" id="GO:0052040">
    <property type="term" value="P:symbiont-mediated perturbation of host programmed cell death"/>
    <property type="evidence" value="ECO:0007669"/>
    <property type="project" value="UniProtKB-KW"/>
</dbReference>
<dbReference type="GO" id="GO:0052026">
    <property type="term" value="P:symbiont-mediated perturbation of host transcription"/>
    <property type="evidence" value="ECO:0000314"/>
    <property type="project" value="GO_Central"/>
</dbReference>
<dbReference type="Gene3D" id="3.90.70.10">
    <property type="entry name" value="Cysteine proteinases"/>
    <property type="match status" value="1"/>
</dbReference>
<dbReference type="InterPro" id="IPR022118">
    <property type="entry name" value="Peptidase_C70_AvrRpt2"/>
</dbReference>
<dbReference type="Pfam" id="PF12385">
    <property type="entry name" value="Peptidase_C70"/>
    <property type="match status" value="1"/>
</dbReference>
<evidence type="ECO:0000256" key="1">
    <source>
        <dbReference type="SAM" id="MobiDB-lite"/>
    </source>
</evidence>
<evidence type="ECO:0000269" key="2">
    <source>
    </source>
</evidence>
<evidence type="ECO:0000269" key="3">
    <source>
    </source>
</evidence>
<evidence type="ECO:0000269" key="4">
    <source>
    </source>
</evidence>
<evidence type="ECO:0000269" key="5">
    <source>
    </source>
</evidence>
<evidence type="ECO:0000269" key="6">
    <source>
    </source>
</evidence>
<evidence type="ECO:0000269" key="7">
    <source>
    </source>
</evidence>
<evidence type="ECO:0000269" key="8">
    <source>
    </source>
</evidence>
<evidence type="ECO:0000269" key="9">
    <source>
    </source>
</evidence>
<evidence type="ECO:0000269" key="10">
    <source>
    </source>
</evidence>
<evidence type="ECO:0000269" key="11">
    <source>
    </source>
</evidence>
<evidence type="ECO:0000305" key="12"/>
<organism>
    <name type="scientific">Pseudomonas syringae pv. tomato</name>
    <dbReference type="NCBI Taxonomy" id="323"/>
    <lineage>
        <taxon>Bacteria</taxon>
        <taxon>Pseudomonadati</taxon>
        <taxon>Pseudomonadota</taxon>
        <taxon>Gammaproteobacteria</taxon>
        <taxon>Pseudomonadales</taxon>
        <taxon>Pseudomonadaceae</taxon>
        <taxon>Pseudomonas</taxon>
    </lineage>
</organism>
<protein>
    <recommendedName>
        <fullName>Cysteine protease avirulence protein AvrRpt2</fullName>
        <shortName>Avirulence protein AvrRpt2</shortName>
        <ecNumber>3.4.22.-</ecNumber>
    </recommendedName>
</protein>
<gene>
    <name type="primary">avrRpt2</name>
</gene>
<comment type="function">
    <text evidence="3 5 7 9 11">Effector protein involved in gene-for-gene resistance in plants expressing RPS2. Its thiol protease activity is required for the degradation of plant cell RIN4 and consequent activation of RPS2 during bacterial infection. The activation of RPS2 is sufficient for the induction of hypersensitive response (HR) and plant resistance. Cleavage of RIN4 by AvrRpt2 also interferes with RPM1-mediated resistance activated by either AvrRpm1 or AvrB. Contributes to virulence in plants lacking the resistance protein RPS2 promoting pathogen growth and disease symptoms. Inhibits PAMP (pathogen-associated molecular patterns)-induced signaling compromising the host's basal defense system. Blocks plant callose deposition, flg22 (a peptide corresponding to the most conserved domain of flagellin) induced accumulation of PR-1, PR-2 and PR-5 and activation of GST6 transcription. The mechanism of virulence is unknown, but this activity is independent of ethylene and salicylic acid response pathways and independent of RIN4 disappearance.</text>
</comment>
<comment type="subunit">
    <text>Interacts physically with plant cell ROC1 (Arabidopsis single-domain cyclophilin) and RIN4.</text>
</comment>
<comment type="subcellular location">
    <subcellularLocation>
        <location evidence="2 4 6">Secreted</location>
    </subcellularLocation>
    <subcellularLocation>
        <location evidence="6">Host cell membrane</location>
    </subcellularLocation>
    <text>Secreted via type III secretion system (T3SS) (PubMed:14526114). Localized to the plant cell membrane (PubMed:14526114).</text>
</comment>
<comment type="PTM">
    <text>Autocleaved inside plant cells upon activation by cyclophilin. Cleavage is crucial in subcellular location and in eliciting HR. Inhibited by cyclosporin A (cyclophilin inhibitor).</text>
</comment>
<comment type="miscellaneous">
    <text>Only naturally present in strain JL1065.</text>
</comment>
<comment type="miscellaneous">
    <text>The C-terminal cleaved product is sufficient to trigger the RPS2-dependent immune response.</text>
</comment>
<comment type="similarity">
    <text evidence="12">Belongs to the peptidase C70 family.</text>
</comment>
<comment type="sequence caution" evidence="12">
    <conflict type="erroneous initiation">
        <sequence resource="EMBL-CDS" id="CAI36145"/>
    </conflict>
</comment>
<reference key="1">
    <citation type="journal article" date="1991" name="Plant Cell">
        <title>Identification of Pseudomonas syringae pathogens of Arabidopsis and a bacterial locus determining avirulence on both Arabidopsis and soybean.</title>
        <authorList>
            <person name="Whalen M.C."/>
            <person name="Innes R.W."/>
            <person name="Bent A.F."/>
            <person name="Staskawicz B.J."/>
        </authorList>
    </citation>
    <scope>NUCLEOTIDE SEQUENCE [GENOMIC DNA]</scope>
    <source>
        <strain>JL1065</strain>
    </source>
</reference>
<reference key="2">
    <citation type="journal article" date="1993" name="J. Bacteriol.">
        <title>Molecular analysis of avirulence gene avrRpt2 and identification of a putative regulatory sequence common to all known Pseudomonas syringae avirulence genes.</title>
        <authorList>
            <person name="Innes R.W."/>
            <person name="Bent A.F."/>
            <person name="Kunkel B.N."/>
            <person name="Bisgrove S.R."/>
            <person name="Staskawicz B.J."/>
        </authorList>
    </citation>
    <scope>NUCLEOTIDE SEQUENCE [GENOMIC DNA]</scope>
    <source>
        <strain>JL1065</strain>
    </source>
</reference>
<reference key="3">
    <citation type="submission" date="2003-10" db="EMBL/GenBank/DDBJ databases">
        <authorList>
            <person name="Innes R.W."/>
        </authorList>
    </citation>
    <scope>SEQUENCE REVISION</scope>
    <source>
        <strain>JL1065</strain>
    </source>
</reference>
<reference key="4">
    <citation type="submission" date="2004-12" db="EMBL/GenBank/DDBJ databases">
        <title>Plant resistance drives evolution of virulence in Pseudomonas syringae pv. phaseolicola by deletion of a chromosomal genomic island.</title>
        <authorList>
            <person name="Pitman A.R."/>
            <person name="Jackson R.W."/>
            <person name="Mansfield J.W."/>
            <person name="Thwaites R."/>
            <person name="Arnold D.L."/>
        </authorList>
    </citation>
    <scope>NUCLEOTIDE SEQUENCE [GENOMIC DNA]</scope>
    <source>
        <strain>JL1065</strain>
    </source>
</reference>
<reference key="5">
    <citation type="journal article" date="1999" name="Mol. Microbiol.">
        <title>Characterization of the Pseudomonas syringae pv. tomato AvrRpt2 protein: demonstration of secretion and processing during bacterial pathogenesis.</title>
        <authorList>
            <person name="Mudgett M.B."/>
            <person name="Staskawicz B.J."/>
        </authorList>
    </citation>
    <scope>PROTEIN SEQUENCE OF N-TERMINUS</scope>
    <scope>PROTEOLYTIC PROCESSING</scope>
    <scope>SUBCELLULAR LOCATION</scope>
</reference>
<reference key="6">
    <citation type="journal article" date="2005" name="Science">
        <title>Activation of a phytopathogenic bacterial effector protein by a eukaryotic cyclophilin.</title>
        <authorList>
            <person name="Coaker G."/>
            <person name="Falick A."/>
            <person name="Staskawicz B.J."/>
        </authorList>
    </citation>
    <scope>PROTEIN SEQUENCE OF 3-41; 52-57; 63-82; 136-144; 148-162 AND 169-185</scope>
    <scope>IDENTIFICATION BY MASS SPECTROMETRY</scope>
    <scope>FUNCTION AS A CYSTEINE PROTEASE</scope>
    <scope>CYCLOPHILIN PROCESSING ACTIVATION</scope>
</reference>
<reference key="7">
    <citation type="journal article" date="1996" name="Plant Cell">
        <title>Interference between two specific pathogen recognition events mediated by distinct plant disease resistance genes.</title>
        <authorList>
            <person name="Ritter C."/>
            <person name="Dangl J.L."/>
        </authorList>
    </citation>
    <scope>INTERFERENCE WITH RPM1 ACTIVATION</scope>
</reference>
<reference key="8">
    <citation type="journal article" date="2000" name="Mol. Plant Microbe Interact.">
        <title>The Pseudomonas syringae avrRpt2 gene product promotes pathogen virulence from inside plant cells.</title>
        <authorList>
            <person name="Chen Z."/>
            <person name="Kloek A.P."/>
            <person name="Boch J."/>
            <person name="Katagiri F."/>
            <person name="Kunkel B.N."/>
        </authorList>
    </citation>
    <scope>FUNCTION IN VIRULENCE</scope>
</reference>
<reference key="9">
    <citation type="journal article" date="2001" name="Mol. Plant Microbe Interact.">
        <title>Mutational analysis of the Arabidopsis RPS2 disease resistance gene and the corresponding pseudomonas syringae avrRpt2 avirulence gene.</title>
        <authorList>
            <person name="Axtell M.J."/>
            <person name="McNellis T.W."/>
            <person name="Mudgett M.B."/>
            <person name="Hsu C.S."/>
            <person name="Staskawicz B.J."/>
        </authorList>
    </citation>
    <scope>SUBCELLULAR LOCATION</scope>
    <scope>PROTEOLYTIC PROCESSING</scope>
    <scope>MUTAGENESIS OF CYS-122; GLY-131; GLY-141 AND GLY-194</scope>
</reference>
<reference key="10">
    <citation type="journal article" date="2003" name="Mol. Microbiol.">
        <title>Genetic and molecular evidence that the Pseudomonas syringae type III effector protein AvrRpt2 is a cysteine protease.</title>
        <authorList>
            <person name="Axtell M.J."/>
            <person name="Chisholm S.T."/>
            <person name="Dahlbeck D."/>
            <person name="Staskawicz B.J."/>
        </authorList>
    </citation>
    <scope>FUNCTION AS A THIOL PROTEASE</scope>
    <scope>MUTAGENESIS OF CYS-122; HIS-208 AND ASP-226</scope>
</reference>
<reference key="11">
    <citation type="journal article" date="2003" name="Plant Physiol.">
        <title>Cleavage of the Pseudomonas syringae type III effector AvrRpt2 requires a host factor(s) common among eukaryotes and is important for AvrRpt2 localization in the host cell.</title>
        <authorList>
            <person name="Jin P."/>
            <person name="Wood M.D."/>
            <person name="Wu Y."/>
            <person name="Xie Z."/>
            <person name="Katagiri F."/>
        </authorList>
    </citation>
    <scope>PROTEOLYTIC PROCESSING BY HOST FACTOR</scope>
    <scope>SUBCELLULAR LOCATION</scope>
    <scope>MUTAGENESIS OF 61-GLY-ARG-62; 63-HIS-LYS-64; 65-ILE-GLU-66; 67-VAL-PRO-68; ALA-69; PHE-70; GLY-71; GLY-72; 75-LYS-LYS-76; SER-78 AND 203-PRO-ASN-204</scope>
</reference>
<reference key="12">
    <citation type="journal article" date="2004" name="Mol. Plant Microbe Interact.">
        <title>Mutations in the Pseudomonas syringae avrRpt2 gene that dissociate its virulence and avirulence activities lead to decreased efficiency in AvrRpt2-induced disappearance of RIN4.</title>
        <authorList>
            <person name="Lim M.T.S."/>
            <person name="Kunkel B.N."/>
        </authorList>
    </citation>
    <scope>FUNCTION</scope>
    <scope>MUTAGENESIS OF CYS-122; GLY-131; GLY-141; GLU-150 AND GLY-194</scope>
</reference>
<reference key="13">
    <citation type="journal article" date="2004" name="Plant J.">
        <title>The Pseudomonas syringae type III effector AvrRpt2 promotes virulence independently of RIN4, a predicted virulence target in Arabidopsis thaliana.</title>
        <authorList>
            <person name="Lim M.T.S."/>
            <person name="Kunkel B.N."/>
        </authorList>
    </citation>
    <scope>VIRULENCE ACTIVITY INDEPENDENT OF RIN4</scope>
    <scope>MUTAGENESIS OF TYR-191 AND ASP-216</scope>
</reference>
<reference key="14">
    <citation type="journal article" date="2005" name="Cell">
        <title>Two Pseudomonas syringae type III effectors inhibit RIN4-regulated basal defense in Arabidopsis.</title>
        <authorList>
            <person name="Kim M.G."/>
            <person name="da Cunha L."/>
            <person name="McFall A.J."/>
            <person name="Belkhadir Y."/>
            <person name="DebRoy S."/>
            <person name="Dangl J.L."/>
            <person name="Mackey D."/>
        </authorList>
    </citation>
    <scope>PAMP-INDUCED SIGNALING</scope>
    <scope>MUTAGENESIS OF CYS-122</scope>
</reference>
<reference key="15">
    <citation type="journal article" date="2005" name="Mol. Plant Microbe Interact.">
        <title>The Pseudomonas syringae avrRpt2 gene contributes to virulence on tomato.</title>
        <authorList>
            <person name="Lim M.T.S."/>
            <person name="Kunkel B.N."/>
        </authorList>
    </citation>
    <scope>FUNCTION IN VIRULENCE</scope>
    <source>
        <strain>JL1065</strain>
    </source>
</reference>
<reference key="16">
    <citation type="journal article" date="2005" name="Proc. Natl. Acad. Sci. U.S.A.">
        <title>The Pseudomonas syringae effector AvrRpt2 cleaves its C-terminally acylated target, RIN4, from Arabidopsis membranes to block RPM1 activation.</title>
        <authorList>
            <person name="Kim H.-S."/>
            <person name="Desveaux D."/>
            <person name="Singer A.U."/>
            <person name="Patel P."/>
            <person name="Sondek J."/>
            <person name="Dangl J.L."/>
        </authorList>
    </citation>
    <scope>INTERFERENCE WITH RPM1 ACTIVATION</scope>
</reference>
<name>ARPT2_PSEUB</name>
<sequence length="255" mass="28158">MKIAPVAINHSPLSREVPSHAAPTQAKQTNLQSEAGDLDARKSSASSPETRALLATKTVLGRHKIEVPAFGGWFKKKSSKHETGGSSANADSSSVASDSTEKPLFRLTHVPYVSQGNERMGCWYACARMVGHSVEAGPRLGLPELYEGREGPAGLQDFSDVERFIHNEGLTRVDLPDNERFTHEELGALLYKHGPIIFGWKTPNDSWHMSVLTGVDKETSSITFHDPRQGPDLAMPLDYFNQRLAWQVPHAMLYR</sequence>